<organism>
    <name type="scientific">Treponema pallidum (strain Nichols)</name>
    <dbReference type="NCBI Taxonomy" id="243276"/>
    <lineage>
        <taxon>Bacteria</taxon>
        <taxon>Pseudomonadati</taxon>
        <taxon>Spirochaetota</taxon>
        <taxon>Spirochaetia</taxon>
        <taxon>Spirochaetales</taxon>
        <taxon>Treponemataceae</taxon>
        <taxon>Treponema</taxon>
    </lineage>
</organism>
<evidence type="ECO:0000255" key="1">
    <source>
        <dbReference type="HAMAP-Rule" id="MF_00282"/>
    </source>
</evidence>
<keyword id="KW-0030">Aminoacyl-tRNA synthetase</keyword>
<keyword id="KW-0067">ATP-binding</keyword>
<keyword id="KW-0963">Cytoplasm</keyword>
<keyword id="KW-0436">Ligase</keyword>
<keyword id="KW-0460">Magnesium</keyword>
<keyword id="KW-0479">Metal-binding</keyword>
<keyword id="KW-0547">Nucleotide-binding</keyword>
<keyword id="KW-0648">Protein biosynthesis</keyword>
<keyword id="KW-1185">Reference proteome</keyword>
<accession>O83938</accession>
<name>SYFA_TREPA</name>
<dbReference type="EC" id="6.1.1.20" evidence="1"/>
<dbReference type="EMBL" id="AE000520">
    <property type="protein sequence ID" value="AAC65930.1"/>
    <property type="molecule type" value="Genomic_DNA"/>
</dbReference>
<dbReference type="PIR" id="C71257">
    <property type="entry name" value="C71257"/>
</dbReference>
<dbReference type="RefSeq" id="WP_010882417.1">
    <property type="nucleotide sequence ID" value="NC_021490.2"/>
</dbReference>
<dbReference type="SMR" id="O83938"/>
<dbReference type="IntAct" id="O83938">
    <property type="interactions" value="3"/>
</dbReference>
<dbReference type="STRING" id="243276.TP_0973"/>
<dbReference type="EnsemblBacteria" id="AAC65930">
    <property type="protein sequence ID" value="AAC65930"/>
    <property type="gene ID" value="TP_0973"/>
</dbReference>
<dbReference type="KEGG" id="tpa:TP_0973"/>
<dbReference type="KEGG" id="tpw:TPANIC_0973"/>
<dbReference type="eggNOG" id="COG0016">
    <property type="taxonomic scope" value="Bacteria"/>
</dbReference>
<dbReference type="HOGENOM" id="CLU_025086_2_2_12"/>
<dbReference type="OrthoDB" id="9800719at2"/>
<dbReference type="Proteomes" id="UP000000811">
    <property type="component" value="Chromosome"/>
</dbReference>
<dbReference type="GO" id="GO:0005737">
    <property type="term" value="C:cytoplasm"/>
    <property type="evidence" value="ECO:0007669"/>
    <property type="project" value="UniProtKB-SubCell"/>
</dbReference>
<dbReference type="GO" id="GO:0005524">
    <property type="term" value="F:ATP binding"/>
    <property type="evidence" value="ECO:0007669"/>
    <property type="project" value="UniProtKB-UniRule"/>
</dbReference>
<dbReference type="GO" id="GO:0000287">
    <property type="term" value="F:magnesium ion binding"/>
    <property type="evidence" value="ECO:0007669"/>
    <property type="project" value="UniProtKB-UniRule"/>
</dbReference>
<dbReference type="GO" id="GO:0004826">
    <property type="term" value="F:phenylalanine-tRNA ligase activity"/>
    <property type="evidence" value="ECO:0007669"/>
    <property type="project" value="UniProtKB-UniRule"/>
</dbReference>
<dbReference type="GO" id="GO:0000049">
    <property type="term" value="F:tRNA binding"/>
    <property type="evidence" value="ECO:0007669"/>
    <property type="project" value="InterPro"/>
</dbReference>
<dbReference type="GO" id="GO:0006432">
    <property type="term" value="P:phenylalanyl-tRNA aminoacylation"/>
    <property type="evidence" value="ECO:0007669"/>
    <property type="project" value="UniProtKB-UniRule"/>
</dbReference>
<dbReference type="CDD" id="cd00496">
    <property type="entry name" value="PheRS_alpha_core"/>
    <property type="match status" value="1"/>
</dbReference>
<dbReference type="Gene3D" id="3.30.930.10">
    <property type="entry name" value="Bira Bifunctional Protein, Domain 2"/>
    <property type="match status" value="1"/>
</dbReference>
<dbReference type="HAMAP" id="MF_00282">
    <property type="entry name" value="Phe_tRNA_synth_alpha2"/>
    <property type="match status" value="1"/>
</dbReference>
<dbReference type="InterPro" id="IPR006195">
    <property type="entry name" value="aa-tRNA-synth_II"/>
</dbReference>
<dbReference type="InterPro" id="IPR045864">
    <property type="entry name" value="aa-tRNA-synth_II/BPL/LPL"/>
</dbReference>
<dbReference type="InterPro" id="IPR004529">
    <property type="entry name" value="Phe-tRNA-synth_IIc_asu"/>
</dbReference>
<dbReference type="InterPro" id="IPR022917">
    <property type="entry name" value="Phe_tRNA_ligase_alpha_bac/arc"/>
</dbReference>
<dbReference type="InterPro" id="IPR002319">
    <property type="entry name" value="Phenylalanyl-tRNA_Synthase"/>
</dbReference>
<dbReference type="NCBIfam" id="TIGR00468">
    <property type="entry name" value="pheS"/>
    <property type="match status" value="1"/>
</dbReference>
<dbReference type="NCBIfam" id="NF003210">
    <property type="entry name" value="PRK04172.1"/>
    <property type="match status" value="1"/>
</dbReference>
<dbReference type="PANTHER" id="PTHR11538:SF40">
    <property type="entry name" value="PHENYLALANINE--TRNA LIGASE ALPHA SUBUNIT"/>
    <property type="match status" value="1"/>
</dbReference>
<dbReference type="PANTHER" id="PTHR11538">
    <property type="entry name" value="PHENYLALANYL-TRNA SYNTHETASE"/>
    <property type="match status" value="1"/>
</dbReference>
<dbReference type="Pfam" id="PF01409">
    <property type="entry name" value="tRNA-synt_2d"/>
    <property type="match status" value="1"/>
</dbReference>
<dbReference type="SUPFAM" id="SSF55681">
    <property type="entry name" value="Class II aaRS and biotin synthetases"/>
    <property type="match status" value="1"/>
</dbReference>
<dbReference type="PROSITE" id="PS50862">
    <property type="entry name" value="AA_TRNA_LIGASE_II"/>
    <property type="match status" value="1"/>
</dbReference>
<comment type="catalytic activity">
    <reaction evidence="1">
        <text>tRNA(Phe) + L-phenylalanine + ATP = L-phenylalanyl-tRNA(Phe) + AMP + diphosphate + H(+)</text>
        <dbReference type="Rhea" id="RHEA:19413"/>
        <dbReference type="Rhea" id="RHEA-COMP:9668"/>
        <dbReference type="Rhea" id="RHEA-COMP:9699"/>
        <dbReference type="ChEBI" id="CHEBI:15378"/>
        <dbReference type="ChEBI" id="CHEBI:30616"/>
        <dbReference type="ChEBI" id="CHEBI:33019"/>
        <dbReference type="ChEBI" id="CHEBI:58095"/>
        <dbReference type="ChEBI" id="CHEBI:78442"/>
        <dbReference type="ChEBI" id="CHEBI:78531"/>
        <dbReference type="ChEBI" id="CHEBI:456215"/>
        <dbReference type="EC" id="6.1.1.20"/>
    </reaction>
</comment>
<comment type="cofactor">
    <cofactor evidence="1">
        <name>Mg(2+)</name>
        <dbReference type="ChEBI" id="CHEBI:18420"/>
    </cofactor>
    <text evidence="1">Binds 2 magnesium ions per tetramer.</text>
</comment>
<comment type="subunit">
    <text evidence="1">Tetramer of two alpha and two beta subunits.</text>
</comment>
<comment type="subcellular location">
    <subcellularLocation>
        <location evidence="1">Cytoplasm</location>
    </subcellularLocation>
</comment>
<comment type="similarity">
    <text evidence="1">Belongs to the class-II aminoacyl-tRNA synthetase family. Phe-tRNA synthetase alpha subunit type 2 subfamily.</text>
</comment>
<reference key="1">
    <citation type="journal article" date="1998" name="Science">
        <title>Complete genome sequence of Treponema pallidum, the syphilis spirochete.</title>
        <authorList>
            <person name="Fraser C.M."/>
            <person name="Norris S.J."/>
            <person name="Weinstock G.M."/>
            <person name="White O."/>
            <person name="Sutton G.G."/>
            <person name="Dodson R.J."/>
            <person name="Gwinn M.L."/>
            <person name="Hickey E.K."/>
            <person name="Clayton R.A."/>
            <person name="Ketchum K.A."/>
            <person name="Sodergren E."/>
            <person name="Hardham J.M."/>
            <person name="McLeod M.P."/>
            <person name="Salzberg S.L."/>
            <person name="Peterson J.D."/>
            <person name="Khalak H.G."/>
            <person name="Richardson D.L."/>
            <person name="Howell J.K."/>
            <person name="Chidambaram M."/>
            <person name="Utterback T.R."/>
            <person name="McDonald L.A."/>
            <person name="Artiach P."/>
            <person name="Bowman C."/>
            <person name="Cotton M.D."/>
            <person name="Fujii C."/>
            <person name="Garland S.A."/>
            <person name="Hatch B."/>
            <person name="Horst K."/>
            <person name="Roberts K.M."/>
            <person name="Sandusky M."/>
            <person name="Weidman J.F."/>
            <person name="Smith H.O."/>
            <person name="Venter J.C."/>
        </authorList>
    </citation>
    <scope>NUCLEOTIDE SEQUENCE [LARGE SCALE GENOMIC DNA]</scope>
    <source>
        <strain>Nichols</strain>
    </source>
</reference>
<gene>
    <name evidence="1" type="primary">pheS</name>
    <name type="ordered locus">TP_0973</name>
</gene>
<proteinExistence type="inferred from homology"/>
<protein>
    <recommendedName>
        <fullName evidence="1">Phenylalanine--tRNA ligase alpha subunit</fullName>
        <ecNumber evidence="1">6.1.1.20</ecNumber>
    </recommendedName>
    <alternativeName>
        <fullName evidence="1">Phenylalanyl-tRNA synthetase alpha subunit</fullName>
        <shortName evidence="1">PheRS</shortName>
    </alternativeName>
</protein>
<sequence>MMPRMTGKADLNTLVHKLHPLEIKVLKNCAMDEILSTSLLISRLGFKEGHANQAFSWLRAKRIIEEHQREQMRSFELTPCGYAAASDGTAEERMLTFLSSPPSLTAIADAAEHLHPRPPLCNGLSLPELAHALTLAPKDVGSAFGILAQEGILRMDGEKRIHIVSPHVSDRMSLTRTLLQRAAARVASPSEASDTPPGTLFESELSDDERRVMERIAKKRGASDSLFKVSVRERVTFTFTPTARAVQEALHTAGLTGNEIGALTVECLKSGAWKTQHLRRYNVHIPPARIIPGRSNAYADFLEHIKDRLVALGFQEFDGPLVETDFWNADALFMPQFHPARDIHDVYYLKHPTHAPTIPEPFLSRVAATHERGADSGSLGWRYSFDRDFTRRLLLRSQGTALSARHLPTAHIPGKYFGIARCFRHDQVDATHLADFYQTEGIVLGTDVNVCTLLGMLKILATEIAGAQEVRYVGGYFPFTEPSIELHALHPALGWFELGGAGLLRPEVTDPLGVHVPVMAWGLGVDRMALLALGISDVRELFSPDIESVRLRV</sequence>
<feature type="chain" id="PRO_0000126805" description="Phenylalanine--tRNA ligase alpha subunit">
    <location>
        <begin position="1"/>
        <end position="553"/>
    </location>
</feature>
<feature type="binding site" evidence="1">
    <location>
        <position position="400"/>
    </location>
    <ligand>
        <name>L-phenylalanine</name>
        <dbReference type="ChEBI" id="CHEBI:58095"/>
    </ligand>
</feature>
<feature type="binding site" evidence="1">
    <location>
        <position position="479"/>
    </location>
    <ligand>
        <name>L-phenylalanine</name>
        <dbReference type="ChEBI" id="CHEBI:58095"/>
    </ligand>
</feature>
<feature type="binding site" evidence="1">
    <location>
        <position position="481"/>
    </location>
    <ligand>
        <name>Mg(2+)</name>
        <dbReference type="ChEBI" id="CHEBI:18420"/>
        <note>shared with beta subunit</note>
    </ligand>
</feature>